<reference key="1">
    <citation type="journal article" date="2008" name="Genome Res.">
        <title>Genome sequence of the beta-rhizobium Cupriavidus taiwanensis and comparative genomics of rhizobia.</title>
        <authorList>
            <person name="Amadou C."/>
            <person name="Pascal G."/>
            <person name="Mangenot S."/>
            <person name="Glew M."/>
            <person name="Bontemps C."/>
            <person name="Capela D."/>
            <person name="Carrere S."/>
            <person name="Cruveiller S."/>
            <person name="Dossat C."/>
            <person name="Lajus A."/>
            <person name="Marchetti M."/>
            <person name="Poinsot V."/>
            <person name="Rouy Z."/>
            <person name="Servin B."/>
            <person name="Saad M."/>
            <person name="Schenowitz C."/>
            <person name="Barbe V."/>
            <person name="Batut J."/>
            <person name="Medigue C."/>
            <person name="Masson-Boivin C."/>
        </authorList>
    </citation>
    <scope>NUCLEOTIDE SEQUENCE [LARGE SCALE GENOMIC DNA]</scope>
    <source>
        <strain>DSM 17343 / BCRC 17206 / CCUG 44338 / CIP 107171 / LMG 19424 / R1</strain>
    </source>
</reference>
<feature type="chain" id="PRO_1000143971" description="Large ribosomal subunit protein uL6">
    <location>
        <begin position="1"/>
        <end position="177"/>
    </location>
</feature>
<dbReference type="EMBL" id="CU633749">
    <property type="protein sequence ID" value="CAQ70853.1"/>
    <property type="molecule type" value="Genomic_DNA"/>
</dbReference>
<dbReference type="RefSeq" id="WP_012354137.1">
    <property type="nucleotide sequence ID" value="NC_010528.1"/>
</dbReference>
<dbReference type="SMR" id="B3R7F3"/>
<dbReference type="GeneID" id="29760401"/>
<dbReference type="KEGG" id="cti:RALTA_A2928"/>
<dbReference type="eggNOG" id="COG0097">
    <property type="taxonomic scope" value="Bacteria"/>
</dbReference>
<dbReference type="HOGENOM" id="CLU_065464_1_2_4"/>
<dbReference type="BioCyc" id="CTAI977880:RALTA_RS14280-MONOMER"/>
<dbReference type="Proteomes" id="UP000001692">
    <property type="component" value="Chromosome 1"/>
</dbReference>
<dbReference type="GO" id="GO:0022625">
    <property type="term" value="C:cytosolic large ribosomal subunit"/>
    <property type="evidence" value="ECO:0007669"/>
    <property type="project" value="TreeGrafter"/>
</dbReference>
<dbReference type="GO" id="GO:0019843">
    <property type="term" value="F:rRNA binding"/>
    <property type="evidence" value="ECO:0007669"/>
    <property type="project" value="UniProtKB-UniRule"/>
</dbReference>
<dbReference type="GO" id="GO:0003735">
    <property type="term" value="F:structural constituent of ribosome"/>
    <property type="evidence" value="ECO:0007669"/>
    <property type="project" value="InterPro"/>
</dbReference>
<dbReference type="GO" id="GO:0002181">
    <property type="term" value="P:cytoplasmic translation"/>
    <property type="evidence" value="ECO:0007669"/>
    <property type="project" value="TreeGrafter"/>
</dbReference>
<dbReference type="FunFam" id="3.90.930.12:FF:000001">
    <property type="entry name" value="50S ribosomal protein L6"/>
    <property type="match status" value="1"/>
</dbReference>
<dbReference type="FunFam" id="3.90.930.12:FF:000002">
    <property type="entry name" value="50S ribosomal protein L6"/>
    <property type="match status" value="1"/>
</dbReference>
<dbReference type="Gene3D" id="3.90.930.12">
    <property type="entry name" value="Ribosomal protein L6, alpha-beta domain"/>
    <property type="match status" value="2"/>
</dbReference>
<dbReference type="HAMAP" id="MF_01365_B">
    <property type="entry name" value="Ribosomal_uL6_B"/>
    <property type="match status" value="1"/>
</dbReference>
<dbReference type="InterPro" id="IPR000702">
    <property type="entry name" value="Ribosomal_uL6-like"/>
</dbReference>
<dbReference type="InterPro" id="IPR036789">
    <property type="entry name" value="Ribosomal_uL6-like_a/b-dom_sf"/>
</dbReference>
<dbReference type="InterPro" id="IPR020040">
    <property type="entry name" value="Ribosomal_uL6_a/b-dom"/>
</dbReference>
<dbReference type="InterPro" id="IPR019906">
    <property type="entry name" value="Ribosomal_uL6_bac-type"/>
</dbReference>
<dbReference type="InterPro" id="IPR002358">
    <property type="entry name" value="Ribosomal_uL6_CS"/>
</dbReference>
<dbReference type="NCBIfam" id="TIGR03654">
    <property type="entry name" value="L6_bact"/>
    <property type="match status" value="1"/>
</dbReference>
<dbReference type="PANTHER" id="PTHR11655">
    <property type="entry name" value="60S/50S RIBOSOMAL PROTEIN L6/L9"/>
    <property type="match status" value="1"/>
</dbReference>
<dbReference type="PANTHER" id="PTHR11655:SF14">
    <property type="entry name" value="LARGE RIBOSOMAL SUBUNIT PROTEIN UL6M"/>
    <property type="match status" value="1"/>
</dbReference>
<dbReference type="Pfam" id="PF00347">
    <property type="entry name" value="Ribosomal_L6"/>
    <property type="match status" value="2"/>
</dbReference>
<dbReference type="PIRSF" id="PIRSF002162">
    <property type="entry name" value="Ribosomal_L6"/>
    <property type="match status" value="1"/>
</dbReference>
<dbReference type="PRINTS" id="PR00059">
    <property type="entry name" value="RIBOSOMALL6"/>
</dbReference>
<dbReference type="SUPFAM" id="SSF56053">
    <property type="entry name" value="Ribosomal protein L6"/>
    <property type="match status" value="2"/>
</dbReference>
<dbReference type="PROSITE" id="PS00525">
    <property type="entry name" value="RIBOSOMAL_L6_1"/>
    <property type="match status" value="1"/>
</dbReference>
<name>RL6_CUPTR</name>
<proteinExistence type="inferred from homology"/>
<evidence type="ECO:0000255" key="1">
    <source>
        <dbReference type="HAMAP-Rule" id="MF_01365"/>
    </source>
</evidence>
<evidence type="ECO:0000305" key="2"/>
<organism>
    <name type="scientific">Cupriavidus taiwanensis (strain DSM 17343 / BCRC 17206 / CCUG 44338 / CIP 107171 / LMG 19424 / R1)</name>
    <name type="common">Ralstonia taiwanensis (strain LMG 19424)</name>
    <dbReference type="NCBI Taxonomy" id="977880"/>
    <lineage>
        <taxon>Bacteria</taxon>
        <taxon>Pseudomonadati</taxon>
        <taxon>Pseudomonadota</taxon>
        <taxon>Betaproteobacteria</taxon>
        <taxon>Burkholderiales</taxon>
        <taxon>Burkholderiaceae</taxon>
        <taxon>Cupriavidus</taxon>
    </lineage>
</organism>
<comment type="function">
    <text evidence="1">This protein binds to the 23S rRNA, and is important in its secondary structure. It is located near the subunit interface in the base of the L7/L12 stalk, and near the tRNA binding site of the peptidyltransferase center.</text>
</comment>
<comment type="subunit">
    <text evidence="1">Part of the 50S ribosomal subunit.</text>
</comment>
<comment type="similarity">
    <text evidence="1">Belongs to the universal ribosomal protein uL6 family.</text>
</comment>
<keyword id="KW-0687">Ribonucleoprotein</keyword>
<keyword id="KW-0689">Ribosomal protein</keyword>
<keyword id="KW-0694">RNA-binding</keyword>
<keyword id="KW-0699">rRNA-binding</keyword>
<accession>B3R7F3</accession>
<sequence length="177" mass="18983">MSRVGKAPIALPKGAEVNVAAGVLSVKGPLGTLSQPIHSLVKVNVENDTLTFAPADESREANALQGTMRALAANMVKGVTTGFERKLNLVGVGYRAQLQGTALKLQLGFSHDVIHEMPEGVKAETPTQTEILIKGADKQKVGQVAAEVRAYRPPEPYKGKGVRYSDERVILKETKKK</sequence>
<gene>
    <name evidence="1" type="primary">rplF</name>
    <name type="ordered locus">RALTA_A2928</name>
</gene>
<protein>
    <recommendedName>
        <fullName evidence="1">Large ribosomal subunit protein uL6</fullName>
    </recommendedName>
    <alternativeName>
        <fullName evidence="2">50S ribosomal protein L6</fullName>
    </alternativeName>
</protein>